<feature type="chain" id="PRO_0000403132" description="tRNA(Met) cytidine acetyltransferase TmcA">
    <location>
        <begin position="1"/>
        <end position="817"/>
    </location>
</feature>
<feature type="domain" description="N-acetyltransferase" evidence="1">
    <location>
        <begin position="469"/>
        <end position="664"/>
    </location>
</feature>
<feature type="binding site" evidence="1">
    <location>
        <position position="265"/>
    </location>
    <ligand>
        <name>ATP</name>
        <dbReference type="ChEBI" id="CHEBI:30616"/>
    </ligand>
</feature>
<feature type="binding site" evidence="1">
    <location>
        <begin position="289"/>
        <end position="298"/>
    </location>
    <ligand>
        <name>ATP</name>
        <dbReference type="ChEBI" id="CHEBI:30616"/>
    </ligand>
</feature>
<feature type="binding site" evidence="1">
    <location>
        <position position="439"/>
    </location>
    <ligand>
        <name>ATP</name>
        <dbReference type="ChEBI" id="CHEBI:30616"/>
    </ligand>
</feature>
<feature type="binding site" evidence="1">
    <location>
        <begin position="589"/>
        <end position="591"/>
    </location>
    <ligand>
        <name>acetyl-CoA</name>
        <dbReference type="ChEBI" id="CHEBI:57288"/>
    </ligand>
</feature>
<feature type="binding site" evidence="1">
    <location>
        <begin position="596"/>
        <end position="602"/>
    </location>
    <ligand>
        <name>acetyl-CoA</name>
        <dbReference type="ChEBI" id="CHEBI:57288"/>
    </ligand>
</feature>
<feature type="binding site" evidence="1">
    <location>
        <position position="629"/>
    </location>
    <ligand>
        <name>acetyl-CoA</name>
        <dbReference type="ChEBI" id="CHEBI:57288"/>
    </ligand>
</feature>
<feature type="binding site" evidence="1">
    <location>
        <position position="636"/>
    </location>
    <ligand>
        <name>acetyl-CoA</name>
        <dbReference type="ChEBI" id="CHEBI:57288"/>
    </ligand>
</feature>
<gene>
    <name evidence="1" type="primary">tmcA</name>
    <name type="ordered locus">PYRAB12760</name>
    <name type="ORF">PAB2428</name>
</gene>
<name>TMCA_PYRAB</name>
<keyword id="KW-0012">Acyltransferase</keyword>
<keyword id="KW-0067">ATP-binding</keyword>
<keyword id="KW-0963">Cytoplasm</keyword>
<keyword id="KW-0547">Nucleotide-binding</keyword>
<keyword id="KW-0694">RNA-binding</keyword>
<keyword id="KW-0698">rRNA processing</keyword>
<keyword id="KW-0699">rRNA-binding</keyword>
<keyword id="KW-0808">Transferase</keyword>
<keyword id="KW-0819">tRNA processing</keyword>
<keyword id="KW-0820">tRNA-binding</keyword>
<sequence length="817" mass="94668">MTIKIRFPKDVREYARKEKVKESIIKLTETSLAEAITNFHRRMIILQGDTLEKAKLAGILAGGVARILSEYIPEFLDRKLRDEDKIEVLYATDALGEDTYGRKRFEEFRKHFSVLAPNAELTSVTFKYSRDILGRTFDILVLDLSYDYSPNDLGRIIETVRGGGLIFILTNPFEKWKDMWTGFHKSLVTPPYTIDDVKKRFNRRLIRKFTEHKGIYIVDADKKKIERRPRKNKSQAKLPEREKVEIPRDIKFPRELYELCLTRGQVEVLKALEDLIENPGMVVLTADRGRGKSVSVGIASIGLAITSKKKNFRIVVTAPELENVQSLLKFAERSLKVLGYKTKTVKESGLIKEVYAKGIGIRYYPPTKGYRQKADLYIVDEAAGIHVPILHRYLEKERVVFSSTIHGYEGAGRGFSVKFLKKAKEKREYKEIHLSVPIRYAEGDPIERWLFDVLLLDAEPVELTEEDYELIRKMEVYLEEPDLDDWFENDREDLRHFVGIYVLAHYRNRPSDVALLADAPHHEARVLRLKNGKIVTAIQIAKEGGIPKAVIDKMAKGYKPPGNIIPDMMVKHHYAKEFAKLRGYRIVRIATHPDAMDLGLGSKALELLVKEAQEKGLDWVGSGFGASEELIRFWVRNGFAVVHLSPTRNPVSGEYTAIVIKPISERAKEIVKKANDEFRLRLTEWLGDTHRDLEPEIARWLFETPFGEAVNYPIHLTKVQRKRLEMFIKRVLTYDTVVDAVKPLVKLYFLDGWMRPYLDDRQIALLIHRVLQAHDWKETAKLLNRTELYTMIELRDIVRGLWYYYKHMLKDEEKDIS</sequence>
<proteinExistence type="inferred from homology"/>
<dbReference type="EC" id="2.3.1.193" evidence="1"/>
<dbReference type="EMBL" id="AJ248287">
    <property type="protein sequence ID" value="CAB50181.1"/>
    <property type="molecule type" value="Genomic_DNA"/>
</dbReference>
<dbReference type="EMBL" id="HE613800">
    <property type="protein sequence ID" value="CCE70714.1"/>
    <property type="molecule type" value="Genomic_DNA"/>
</dbReference>
<dbReference type="PIR" id="H75035">
    <property type="entry name" value="H75035"/>
</dbReference>
<dbReference type="RefSeq" id="WP_010868389.1">
    <property type="nucleotide sequence ID" value="NC_000868.1"/>
</dbReference>
<dbReference type="SMR" id="Q9UZ78"/>
<dbReference type="STRING" id="272844.PAB2428"/>
<dbReference type="KEGG" id="pab:PAB2428"/>
<dbReference type="PATRIC" id="fig|272844.11.peg.1357"/>
<dbReference type="eggNOG" id="arCOG01951">
    <property type="taxonomic scope" value="Archaea"/>
</dbReference>
<dbReference type="HOGENOM" id="CLU_004652_1_0_2"/>
<dbReference type="OrthoDB" id="312894at2157"/>
<dbReference type="PhylomeDB" id="Q9UZ78"/>
<dbReference type="Proteomes" id="UP000000810">
    <property type="component" value="Chromosome"/>
</dbReference>
<dbReference type="Proteomes" id="UP000009139">
    <property type="component" value="Chromosome"/>
</dbReference>
<dbReference type="GO" id="GO:0005737">
    <property type="term" value="C:cytoplasm"/>
    <property type="evidence" value="ECO:0007669"/>
    <property type="project" value="UniProtKB-SubCell"/>
</dbReference>
<dbReference type="GO" id="GO:1990883">
    <property type="term" value="F:18S rRNA cytidine N-acetyltransferase activity"/>
    <property type="evidence" value="ECO:0007669"/>
    <property type="project" value="TreeGrafter"/>
</dbReference>
<dbReference type="GO" id="GO:0005524">
    <property type="term" value="F:ATP binding"/>
    <property type="evidence" value="ECO:0007669"/>
    <property type="project" value="UniProtKB-UniRule"/>
</dbReference>
<dbReference type="GO" id="GO:0106162">
    <property type="term" value="F:mRNA N-acetyltransferase activity"/>
    <property type="evidence" value="ECO:0007669"/>
    <property type="project" value="RHEA"/>
</dbReference>
<dbReference type="GO" id="GO:0019843">
    <property type="term" value="F:rRNA binding"/>
    <property type="evidence" value="ECO:0007669"/>
    <property type="project" value="UniProtKB-KW"/>
</dbReference>
<dbReference type="GO" id="GO:0000049">
    <property type="term" value="F:tRNA binding"/>
    <property type="evidence" value="ECO:0007669"/>
    <property type="project" value="UniProtKB-UniRule"/>
</dbReference>
<dbReference type="GO" id="GO:0051392">
    <property type="term" value="F:tRNA N4-acetyltransferase activity"/>
    <property type="evidence" value="ECO:0007669"/>
    <property type="project" value="UniProtKB-UniRule"/>
</dbReference>
<dbReference type="GO" id="GO:1904812">
    <property type="term" value="P:rRNA acetylation involved in maturation of SSU-rRNA"/>
    <property type="evidence" value="ECO:0007669"/>
    <property type="project" value="TreeGrafter"/>
</dbReference>
<dbReference type="GO" id="GO:0051391">
    <property type="term" value="P:tRNA acetylation"/>
    <property type="evidence" value="ECO:0007669"/>
    <property type="project" value="UniProtKB-UniRule"/>
</dbReference>
<dbReference type="GO" id="GO:0002101">
    <property type="term" value="P:tRNA wobble cytosine modification"/>
    <property type="evidence" value="ECO:0007669"/>
    <property type="project" value="UniProtKB-UniRule"/>
</dbReference>
<dbReference type="FunFam" id="3.40.50.300:FF:002218">
    <property type="entry name" value="tRNA(Met) cytidine acetyltransferase TmcA"/>
    <property type="match status" value="1"/>
</dbReference>
<dbReference type="FunFam" id="3.40.630.30:FF:000140">
    <property type="entry name" value="tRNA(Met) cytidine acetyltransferase TmcA"/>
    <property type="match status" value="1"/>
</dbReference>
<dbReference type="Gene3D" id="3.40.50.11040">
    <property type="match status" value="1"/>
</dbReference>
<dbReference type="Gene3D" id="3.40.630.30">
    <property type="match status" value="1"/>
</dbReference>
<dbReference type="Gene3D" id="3.40.50.300">
    <property type="entry name" value="P-loop containing nucleotide triphosphate hydrolases"/>
    <property type="match status" value="1"/>
</dbReference>
<dbReference type="HAMAP" id="MF_01886">
    <property type="entry name" value="tRNA_acetyltr_TmcA"/>
    <property type="match status" value="1"/>
</dbReference>
<dbReference type="InterPro" id="IPR016181">
    <property type="entry name" value="Acyl_CoA_acyltransferase"/>
</dbReference>
<dbReference type="InterPro" id="IPR000182">
    <property type="entry name" value="GNAT_dom"/>
</dbReference>
<dbReference type="InterPro" id="IPR007807">
    <property type="entry name" value="NAT10/TcmA_helicase"/>
</dbReference>
<dbReference type="InterPro" id="IPR027417">
    <property type="entry name" value="P-loop_NTPase"/>
</dbReference>
<dbReference type="InterPro" id="IPR032672">
    <property type="entry name" value="TmcA/NAT10/Kre33"/>
</dbReference>
<dbReference type="InterPro" id="IPR013562">
    <property type="entry name" value="TmcA_N"/>
</dbReference>
<dbReference type="InterPro" id="IPR024914">
    <property type="entry name" value="tRNA_acetyltr_TmcA"/>
</dbReference>
<dbReference type="PANTHER" id="PTHR10925">
    <property type="entry name" value="N-ACETYLTRANSFERASE 10"/>
    <property type="match status" value="1"/>
</dbReference>
<dbReference type="PANTHER" id="PTHR10925:SF5">
    <property type="entry name" value="RNA CYTIDINE ACETYLTRANSFERASE"/>
    <property type="match status" value="1"/>
</dbReference>
<dbReference type="Pfam" id="PF13718">
    <property type="entry name" value="GNAT_acetyltr_2"/>
    <property type="match status" value="1"/>
</dbReference>
<dbReference type="Pfam" id="PF05127">
    <property type="entry name" value="NAT10_TcmA_helicase"/>
    <property type="match status" value="1"/>
</dbReference>
<dbReference type="Pfam" id="PF08351">
    <property type="entry name" value="TmcA_N"/>
    <property type="match status" value="1"/>
</dbReference>
<dbReference type="SUPFAM" id="SSF55729">
    <property type="entry name" value="Acyl-CoA N-acyltransferases (Nat)"/>
    <property type="match status" value="1"/>
</dbReference>
<dbReference type="SUPFAM" id="SSF52540">
    <property type="entry name" value="P-loop containing nucleoside triphosphate hydrolases"/>
    <property type="match status" value="1"/>
</dbReference>
<dbReference type="PROSITE" id="PS51186">
    <property type="entry name" value="GNAT"/>
    <property type="match status" value="1"/>
</dbReference>
<organism>
    <name type="scientific">Pyrococcus abyssi (strain GE5 / Orsay)</name>
    <dbReference type="NCBI Taxonomy" id="272844"/>
    <lineage>
        <taxon>Archaea</taxon>
        <taxon>Methanobacteriati</taxon>
        <taxon>Methanobacteriota</taxon>
        <taxon>Thermococci</taxon>
        <taxon>Thermococcales</taxon>
        <taxon>Thermococcaceae</taxon>
        <taxon>Pyrococcus</taxon>
    </lineage>
</organism>
<reference key="1">
    <citation type="journal article" date="2003" name="Mol. Microbiol.">
        <title>An integrated analysis of the genome of the hyperthermophilic archaeon Pyrococcus abyssi.</title>
        <authorList>
            <person name="Cohen G.N."/>
            <person name="Barbe V."/>
            <person name="Flament D."/>
            <person name="Galperin M."/>
            <person name="Heilig R."/>
            <person name="Lecompte O."/>
            <person name="Poch O."/>
            <person name="Prieur D."/>
            <person name="Querellou J."/>
            <person name="Ripp R."/>
            <person name="Thierry J.-C."/>
            <person name="Van der Oost J."/>
            <person name="Weissenbach J."/>
            <person name="Zivanovic Y."/>
            <person name="Forterre P."/>
        </authorList>
    </citation>
    <scope>NUCLEOTIDE SEQUENCE [LARGE SCALE GENOMIC DNA]</scope>
    <source>
        <strain>GE5 / Orsay</strain>
    </source>
</reference>
<reference key="2">
    <citation type="journal article" date="2012" name="Curr. Microbiol.">
        <title>Re-annotation of two hyperthermophilic archaea Pyrococcus abyssi GE5 and Pyrococcus furiosus DSM 3638.</title>
        <authorList>
            <person name="Gao J."/>
            <person name="Wang J."/>
        </authorList>
    </citation>
    <scope>GENOME REANNOTATION</scope>
    <source>
        <strain>GE5 / Orsay</strain>
    </source>
</reference>
<protein>
    <recommendedName>
        <fullName evidence="1">tRNA(Met) cytidine acetyltransferase TmcA</fullName>
        <ecNumber evidence="1">2.3.1.193</ecNumber>
    </recommendedName>
</protein>
<comment type="function">
    <text evidence="1">Catalyzes the formation of N(4)-acetylcytidine (ac(4)C) at the wobble position of tRNA(Met), by using acetyl-CoA as an acetyl donor and ATP (or GTP).</text>
</comment>
<comment type="function">
    <text evidence="1">Catalyzes the formation of N(4)-acetylcytidine (ac(4)C) sites in rRNA, tRNA, mRNA and non-coding (nc) RNA, almost always on the middle C of a CCG motif. In hyperthermophiles more acetylation is seen at higher temperatures.</text>
</comment>
<comment type="catalytic activity">
    <reaction evidence="1">
        <text>cytidine(34) in elongator tRNA(Met) + acetyl-CoA + ATP + H2O = N(4)-acetylcytidine(34) in elongator tRNA(Met) + ADP + phosphate + CoA + H(+)</text>
        <dbReference type="Rhea" id="RHEA:43788"/>
        <dbReference type="Rhea" id="RHEA-COMP:10693"/>
        <dbReference type="Rhea" id="RHEA-COMP:10694"/>
        <dbReference type="ChEBI" id="CHEBI:15377"/>
        <dbReference type="ChEBI" id="CHEBI:15378"/>
        <dbReference type="ChEBI" id="CHEBI:30616"/>
        <dbReference type="ChEBI" id="CHEBI:43474"/>
        <dbReference type="ChEBI" id="CHEBI:57287"/>
        <dbReference type="ChEBI" id="CHEBI:57288"/>
        <dbReference type="ChEBI" id="CHEBI:74900"/>
        <dbReference type="ChEBI" id="CHEBI:82748"/>
        <dbReference type="ChEBI" id="CHEBI:456216"/>
        <dbReference type="EC" id="2.3.1.193"/>
    </reaction>
</comment>
<comment type="catalytic activity">
    <reaction evidence="1">
        <text>a cytidine in RNA + acetyl-CoA + ATP + H2O = an N(4)-acetylcytidine in RNA + ADP + phosphate + CoA + H(+)</text>
        <dbReference type="Rhea" id="RHEA:82211"/>
        <dbReference type="Rhea" id="RHEA-COMP:15704"/>
        <dbReference type="Rhea" id="RHEA-COMP:19834"/>
        <dbReference type="ChEBI" id="CHEBI:15377"/>
        <dbReference type="ChEBI" id="CHEBI:15378"/>
        <dbReference type="ChEBI" id="CHEBI:30616"/>
        <dbReference type="ChEBI" id="CHEBI:43474"/>
        <dbReference type="ChEBI" id="CHEBI:57287"/>
        <dbReference type="ChEBI" id="CHEBI:57288"/>
        <dbReference type="ChEBI" id="CHEBI:74900"/>
        <dbReference type="ChEBI" id="CHEBI:82748"/>
        <dbReference type="ChEBI" id="CHEBI:456216"/>
    </reaction>
</comment>
<comment type="catalytic activity">
    <reaction evidence="1">
        <text>a cytidine in tRNA + acetyl-CoA + ATP + H2O = an N(4)-acetylcytidine in tRNA + ADP + phosphate + CoA + H(+)</text>
        <dbReference type="Rhea" id="RHEA:53876"/>
        <dbReference type="Rhea" id="RHEA-COMP:13670"/>
        <dbReference type="Rhea" id="RHEA-COMP:13671"/>
        <dbReference type="ChEBI" id="CHEBI:15377"/>
        <dbReference type="ChEBI" id="CHEBI:15378"/>
        <dbReference type="ChEBI" id="CHEBI:30616"/>
        <dbReference type="ChEBI" id="CHEBI:43474"/>
        <dbReference type="ChEBI" id="CHEBI:57287"/>
        <dbReference type="ChEBI" id="CHEBI:57288"/>
        <dbReference type="ChEBI" id="CHEBI:74900"/>
        <dbReference type="ChEBI" id="CHEBI:82748"/>
        <dbReference type="ChEBI" id="CHEBI:456216"/>
    </reaction>
</comment>
<comment type="catalytic activity">
    <reaction evidence="1">
        <text>a cytidine in mRNA + acetyl-CoA + ATP + H2O = an N(4)-acetylcytidine in mRNA + ADP + phosphate + CoA + H(+)</text>
        <dbReference type="Rhea" id="RHEA:58480"/>
        <dbReference type="Rhea" id="RHEA-COMP:15145"/>
        <dbReference type="Rhea" id="RHEA-COMP:15146"/>
        <dbReference type="ChEBI" id="CHEBI:15377"/>
        <dbReference type="ChEBI" id="CHEBI:15378"/>
        <dbReference type="ChEBI" id="CHEBI:30616"/>
        <dbReference type="ChEBI" id="CHEBI:43474"/>
        <dbReference type="ChEBI" id="CHEBI:57287"/>
        <dbReference type="ChEBI" id="CHEBI:57288"/>
        <dbReference type="ChEBI" id="CHEBI:74900"/>
        <dbReference type="ChEBI" id="CHEBI:82748"/>
        <dbReference type="ChEBI" id="CHEBI:456216"/>
    </reaction>
</comment>
<comment type="subcellular location">
    <subcellularLocation>
        <location evidence="1">Cytoplasm</location>
    </subcellularLocation>
</comment>
<comment type="similarity">
    <text evidence="1">Belongs to the RNA cytidine acetyltransferase family. TmcA subfamily.</text>
</comment>
<accession>Q9UZ78</accession>
<accession>G8ZH77</accession>
<evidence type="ECO:0000255" key="1">
    <source>
        <dbReference type="HAMAP-Rule" id="MF_01886"/>
    </source>
</evidence>